<reference key="1">
    <citation type="journal article" date="1996" name="FEBS Lett.">
        <title>Primary structure of a novel ABC transporter with a chromosomal localization on the band encoding the multidrug resistance-associated protein.</title>
        <authorList>
            <person name="Klugbauer N."/>
            <person name="Hofmann F."/>
        </authorList>
    </citation>
    <scope>NUCLEOTIDE SEQUENCE [MRNA] (ISOFORM 1)</scope>
    <scope>TISSUE SPECIFICITY</scope>
    <source>
        <tissue>Thyroid carcinoma</tissue>
    </source>
</reference>
<reference key="2">
    <citation type="journal article" date="1997" name="Genomics">
        <title>The cloning of a human ABC gene (ABC3) mapping to chromosome 16p13.3.</title>
        <authorList>
            <person name="Connors T.D."/>
            <person name="van Raay T.J."/>
            <person name="Petry L.R."/>
            <person name="Klinger K.W."/>
            <person name="Landes G.M."/>
            <person name="Burn T.C."/>
        </authorList>
    </citation>
    <scope>NUCLEOTIDE SEQUENCE [MRNA] (ISOFORM 1)</scope>
</reference>
<reference key="3">
    <citation type="journal article" date="2001" name="FEBS Lett.">
        <title>ABCA3 is a lamellar body membrane protein in human lung alveolar type II cells.</title>
        <authorList>
            <person name="Yamano G."/>
            <person name="Funahashi H."/>
            <person name="Kawanami O."/>
            <person name="Zhao L."/>
            <person name="Ban N."/>
            <person name="Uchida Y."/>
            <person name="Morohoshi T."/>
            <person name="Ogawa J."/>
            <person name="Shioda S."/>
            <person name="Inagaki N."/>
        </authorList>
    </citation>
    <scope>NUCLEOTIDE SEQUENCE [MRNA] (ISOFORM 1)</scope>
    <scope>TISSUE SPECIFICITY</scope>
    <scope>SUBCELLULAR LOCATION</scope>
    <source>
        <tissue>Lung</tissue>
    </source>
</reference>
<reference key="4">
    <citation type="submission" date="2005-05" db="EMBL/GenBank/DDBJ databases">
        <authorList>
            <consortium name="SeattleSNPs variation discovery resource"/>
        </authorList>
    </citation>
    <scope>NUCLEOTIDE SEQUENCE [GENOMIC DNA]</scope>
    <scope>VARIANTS HIS-140 AND SER-766</scope>
</reference>
<reference key="5">
    <citation type="journal article" date="2004" name="Nature">
        <title>The sequence and analysis of duplication-rich human chromosome 16.</title>
        <authorList>
            <person name="Martin J."/>
            <person name="Han C."/>
            <person name="Gordon L.A."/>
            <person name="Terry A."/>
            <person name="Prabhakar S."/>
            <person name="She X."/>
            <person name="Xie G."/>
            <person name="Hellsten U."/>
            <person name="Chan Y.M."/>
            <person name="Altherr M."/>
            <person name="Couronne O."/>
            <person name="Aerts A."/>
            <person name="Bajorek E."/>
            <person name="Black S."/>
            <person name="Blumer H."/>
            <person name="Branscomb E."/>
            <person name="Brown N.C."/>
            <person name="Bruno W.J."/>
            <person name="Buckingham J.M."/>
            <person name="Callen D.F."/>
            <person name="Campbell C.S."/>
            <person name="Campbell M.L."/>
            <person name="Campbell E.W."/>
            <person name="Caoile C."/>
            <person name="Challacombe J.F."/>
            <person name="Chasteen L.A."/>
            <person name="Chertkov O."/>
            <person name="Chi H.C."/>
            <person name="Christensen M."/>
            <person name="Clark L.M."/>
            <person name="Cohn J.D."/>
            <person name="Denys M."/>
            <person name="Detter J.C."/>
            <person name="Dickson M."/>
            <person name="Dimitrijevic-Bussod M."/>
            <person name="Escobar J."/>
            <person name="Fawcett J.J."/>
            <person name="Flowers D."/>
            <person name="Fotopulos D."/>
            <person name="Glavina T."/>
            <person name="Gomez M."/>
            <person name="Gonzales E."/>
            <person name="Goodstein D."/>
            <person name="Goodwin L.A."/>
            <person name="Grady D.L."/>
            <person name="Grigoriev I."/>
            <person name="Groza M."/>
            <person name="Hammon N."/>
            <person name="Hawkins T."/>
            <person name="Haydu L."/>
            <person name="Hildebrand C.E."/>
            <person name="Huang W."/>
            <person name="Israni S."/>
            <person name="Jett J."/>
            <person name="Jewett P.B."/>
            <person name="Kadner K."/>
            <person name="Kimball H."/>
            <person name="Kobayashi A."/>
            <person name="Krawczyk M.-C."/>
            <person name="Leyba T."/>
            <person name="Longmire J.L."/>
            <person name="Lopez F."/>
            <person name="Lou Y."/>
            <person name="Lowry S."/>
            <person name="Ludeman T."/>
            <person name="Manohar C.F."/>
            <person name="Mark G.A."/>
            <person name="McMurray K.L."/>
            <person name="Meincke L.J."/>
            <person name="Morgan J."/>
            <person name="Moyzis R.K."/>
            <person name="Mundt M.O."/>
            <person name="Munk A.C."/>
            <person name="Nandkeshwar R.D."/>
            <person name="Pitluck S."/>
            <person name="Pollard M."/>
            <person name="Predki P."/>
            <person name="Parson-Quintana B."/>
            <person name="Ramirez L."/>
            <person name="Rash S."/>
            <person name="Retterer J."/>
            <person name="Ricke D.O."/>
            <person name="Robinson D.L."/>
            <person name="Rodriguez A."/>
            <person name="Salamov A."/>
            <person name="Saunders E.H."/>
            <person name="Scott D."/>
            <person name="Shough T."/>
            <person name="Stallings R.L."/>
            <person name="Stalvey M."/>
            <person name="Sutherland R.D."/>
            <person name="Tapia R."/>
            <person name="Tesmer J.G."/>
            <person name="Thayer N."/>
            <person name="Thompson L.S."/>
            <person name="Tice H."/>
            <person name="Torney D.C."/>
            <person name="Tran-Gyamfi M."/>
            <person name="Tsai M."/>
            <person name="Ulanovsky L.E."/>
            <person name="Ustaszewska A."/>
            <person name="Vo N."/>
            <person name="White P.S."/>
            <person name="Williams A.L."/>
            <person name="Wills P.L."/>
            <person name="Wu J.-R."/>
            <person name="Wu K."/>
            <person name="Yang J."/>
            <person name="DeJong P."/>
            <person name="Bruce D."/>
            <person name="Doggett N.A."/>
            <person name="Deaven L."/>
            <person name="Schmutz J."/>
            <person name="Grimwood J."/>
            <person name="Richardson P."/>
            <person name="Rokhsar D.S."/>
            <person name="Eichler E.E."/>
            <person name="Gilna P."/>
            <person name="Lucas S.M."/>
            <person name="Myers R.M."/>
            <person name="Rubin E.M."/>
            <person name="Pennacchio L.A."/>
        </authorList>
    </citation>
    <scope>NUCLEOTIDE SEQUENCE [LARGE SCALE GENOMIC DNA]</scope>
</reference>
<reference key="6">
    <citation type="submission" date="2005-09" db="EMBL/GenBank/DDBJ databases">
        <authorList>
            <person name="Mural R.J."/>
            <person name="Istrail S."/>
            <person name="Sutton G.G."/>
            <person name="Florea L."/>
            <person name="Halpern A.L."/>
            <person name="Mobarry C.M."/>
            <person name="Lippert R."/>
            <person name="Walenz B."/>
            <person name="Shatkay H."/>
            <person name="Dew I."/>
            <person name="Miller J.R."/>
            <person name="Flanigan M.J."/>
            <person name="Edwards N.J."/>
            <person name="Bolanos R."/>
            <person name="Fasulo D."/>
            <person name="Halldorsson B.V."/>
            <person name="Hannenhalli S."/>
            <person name="Turner R."/>
            <person name="Yooseph S."/>
            <person name="Lu F."/>
            <person name="Nusskern D.R."/>
            <person name="Shue B.C."/>
            <person name="Zheng X.H."/>
            <person name="Zhong F."/>
            <person name="Delcher A.L."/>
            <person name="Huson D.H."/>
            <person name="Kravitz S.A."/>
            <person name="Mouchard L."/>
            <person name="Reinert K."/>
            <person name="Remington K.A."/>
            <person name="Clark A.G."/>
            <person name="Waterman M.S."/>
            <person name="Eichler E.E."/>
            <person name="Adams M.D."/>
            <person name="Hunkapiller M.W."/>
            <person name="Myers E.W."/>
            <person name="Venter J.C."/>
        </authorList>
    </citation>
    <scope>NUCLEOTIDE SEQUENCE [LARGE SCALE GENOMIC DNA]</scope>
</reference>
<reference key="7">
    <citation type="journal article" date="2004" name="Genome Res.">
        <title>The status, quality, and expansion of the NIH full-length cDNA project: the Mammalian Gene Collection (MGC).</title>
        <authorList>
            <consortium name="The MGC Project Team"/>
        </authorList>
    </citation>
    <scope>NUCLEOTIDE SEQUENCE [LARGE SCALE MRNA] (ISOFORMS 1 AND 2)</scope>
    <source>
        <tissue>Brain</tissue>
        <tissue>Lung</tissue>
    </source>
</reference>
<reference key="8">
    <citation type="journal article" date="2012" name="Nat. Commun.">
        <title>Quantitative maps of protein phosphorylation sites across 14 different rat organs and tissues.</title>
        <authorList>
            <person name="Lundby A."/>
            <person name="Secher A."/>
            <person name="Lage K."/>
            <person name="Nordsborg N.B."/>
            <person name="Dmytriyev A."/>
            <person name="Lundby C."/>
            <person name="Olsen J.V."/>
        </authorList>
    </citation>
    <scope>NUCLEOTIDE SEQUENCE [MRNA] OF 117-197</scope>
    <scope>SUBCELLULAR LOCATION</scope>
</reference>
<reference key="9">
    <citation type="journal article" date="2006" name="J. Biol. Chem.">
        <title>Characterization and classification of ATP-binding cassette transporter ABCA3 mutants in fatal surfactant deficiency.</title>
        <authorList>
            <person name="Matsumura Y."/>
            <person name="Ban N."/>
            <person name="Ueda K."/>
            <person name="Inagaki N."/>
        </authorList>
    </citation>
    <scope>FUNCTION</scope>
    <scope>PROTEOLYTIC CLEAVAGE</scope>
    <scope>GLYCOSYLATION</scope>
    <scope>SUBCELLULAR LOCATION</scope>
    <scope>CHARACTERIZATION OF VARIANTS SMDP3 PRO-101; ASP-568; PRO-982; SER-1221; PRO-1553; PRO-1580 AND PRO-1591</scope>
    <scope>MUTAGENESIS OF GLY-1221 AND LEU-1580</scope>
</reference>
<reference key="10">
    <citation type="journal article" date="2007" name="FEBS Lett.">
        <title>ABCA3-mediated choline-phospholipids uptake into intracellular vesicles in A549 cells.</title>
        <authorList>
            <person name="Matsumura Y."/>
            <person name="Sakai H."/>
            <person name="Sasaki M."/>
            <person name="Ban N."/>
            <person name="Inagaki N."/>
        </authorList>
    </citation>
    <scope>FUNCTION</scope>
    <scope>CATALYTIC ACTIVITY</scope>
    <scope>CHARACTERIZATION OF VARIANT SMDP3 ASP-568</scope>
    <scope>SUBCELLULAR LOCATION</scope>
</reference>
<reference key="11">
    <citation type="journal article" date="2010" name="FEBS Lett.">
        <title>The surfactant lipid transporter ABCA3 is N-terminally cleaved inside LAMP3-positive vesicles.</title>
        <authorList>
            <person name="Engelbrecht S."/>
            <person name="Kaltenborn E."/>
            <person name="Griese M."/>
            <person name="Kern S."/>
        </authorList>
    </citation>
    <scope>PROTEOLYTIC CLEAVAGE</scope>
    <scope>SUBCELLULAR LOCATION</scope>
    <scope>CHARACTERIZATION OF VARIANTS SMDP3 LYS-215 AND VAL-292</scope>
</reference>
<reference key="12">
    <citation type="journal article" date="2013" name="Am. J. Physiol.">
        <title>Disruption of N-linked glycosylation promotes proteasomal degradation of the human ATP-binding cassette transporter ABCA3.</title>
        <authorList>
            <person name="Beers M.F."/>
            <person name="Zhao M."/>
            <person name="Tomer Y."/>
            <person name="Russo S.J."/>
            <person name="Zhang P."/>
            <person name="Gonzales L.W."/>
            <person name="Guttentag S.H."/>
            <person name="Mulugeta S."/>
        </authorList>
    </citation>
    <scope>GLYCOSYLATION AT ASN-124 AND ASN-140</scope>
    <scope>SUBCELLULAR LOCATION</scope>
    <scope>MUTAGENESIS OF ASN-53; ASN-124; ASN-140 AND ASN-945</scope>
</reference>
<reference key="13">
    <citation type="journal article" date="2015" name="Biochim. Biophys. Acta">
        <title>ABCA3 protects alveolar epithelial cells against free cholesterol induced cell death.</title>
        <authorList>
            <person name="Zarbock R."/>
            <person name="Kaltenborn E."/>
            <person name="Frixel S."/>
            <person name="Wittmann T."/>
            <person name="Liebisch G."/>
            <person name="Schmitz G."/>
            <person name="Griese M."/>
        </authorList>
    </citation>
    <scope>FUNCTION</scope>
    <scope>CHARACTERIZATION OF VARIANTS SMDP3 LYS-215 AND VAL-292</scope>
    <scope>CATALYTIC ACTIVITY</scope>
</reference>
<reference key="14">
    <citation type="journal article" date="2016" name="Int. J. Mol. Med.">
        <title>Homooligomerization of ABCA3 and its functional significance.</title>
        <authorList>
            <person name="Frixel S."/>
            <person name="Lotz-Havla A.S."/>
            <person name="Kern S."/>
            <person name="Kaltenborn E."/>
            <person name="Wittmann T."/>
            <person name="Gersting S.W."/>
            <person name="Muntau A.C."/>
            <person name="Zarbock R."/>
            <person name="Griese M."/>
        </authorList>
    </citation>
    <scope>SUBUNIT</scope>
    <scope>SUBCELLULAR LOCATION</scope>
    <scope>CHARACTERIZATION OF VARIANTS SMDP3 LYS-215; CYS-280 AND LYS-288</scope>
    <scope>MUTAGENESIS OF SER-693</scope>
</reference>
<reference key="15">
    <citation type="journal article" date="2016" name="J. Biol. Chem.">
        <title>Functional Validation of ABCA3 as a Miltefosine Transporter in Human Macrophages: IMPACT ON INTRACELLULAR SURVIVAL OF LEISHMANIA (VIANNIA) PANAMENSIS.</title>
        <authorList>
            <person name="Dohmen L.C."/>
            <person name="Navas A."/>
            <person name="Vargas D.A."/>
            <person name="Gregory D.J."/>
            <person name="Kip A."/>
            <person name="Dorlo T.P."/>
            <person name="Gomez M.A."/>
        </authorList>
    </citation>
    <scope>INDUCTION</scope>
    <scope>FUNCTION</scope>
    <scope>CATALYTIC ACTIVITY</scope>
</reference>
<reference key="16">
    <citation type="journal article" date="2016" name="PLoS ONE">
        <title>Analysis of the Proteolytic Processing of ABCA3: Identification of Cleavage Site and Involved Proteases.</title>
        <authorList>
            <person name="Hofmann N."/>
            <person name="Galetskiy D."/>
            <person name="Rauch D."/>
            <person name="Wittmann T."/>
            <person name="Marquardt A."/>
            <person name="Griese M."/>
            <person name="Zarbock R."/>
        </authorList>
    </citation>
    <scope>IDENTIFICATION BY MASS SPECTROMETRY</scope>
    <scope>PROTEOLYTIC CLEAVAGE</scope>
    <scope>SITE</scope>
    <scope>MUTAGENESIS OF 173-LEU-LYS-174</scope>
</reference>
<reference key="17">
    <citation type="journal article" date="2017" name="Biochim. Biophys. Acta">
        <title>Quantification of volume and lipid filling of intracellular vesicles carrying the ABCA3 transporter.</title>
        <authorList>
            <person name="Hoeppner S."/>
            <person name="Kinting S."/>
            <person name="Torrano A.A."/>
            <person name="Schindlbeck U."/>
            <person name="Braeuchle C."/>
            <person name="Zarbock R."/>
            <person name="Wittmann T."/>
            <person name="Griese M."/>
        </authorList>
    </citation>
    <scope>FUNCTION</scope>
    <scope>CATALYTIC ACTIVITY</scope>
    <scope>CHARACTERIZATION OF VARIANTS SMDP3 VAL-292 AND ASN-1388</scope>
</reference>
<reference key="18">
    <citation type="journal article" date="2019" name="Biochim. Biophys. Acta">
        <title>Metabolic labelling of choline phospholipids probes ABCA3 transport in lamellar bodies.</title>
        <authorList>
            <person name="Li Y."/>
            <person name="Kinting S."/>
            <person name="Hoeppner S."/>
            <person name="Forstner M.E."/>
            <person name="Uhl O."/>
            <person name="Koletzko B."/>
            <person name="Griese M."/>
        </authorList>
    </citation>
    <scope>CATALYTIC ACTIVITY</scope>
    <scope>FUNCTION</scope>
    <scope>SUBCELLULAR LOCATION</scope>
    <scope>CHARACTERIZATION OF VARIANTS SMDP3 ASP-568 AND PRO-1580</scope>
    <scope>ACTIVITY REGULATION</scope>
</reference>
<reference key="19">
    <citation type="journal article" date="2004" name="N. Engl. J. Med.">
        <title>ABCA3 gene mutations in newborns with fatal surfactant deficiency.</title>
        <authorList>
            <person name="Shulenin S."/>
            <person name="Nogee L.M."/>
            <person name="Annilo T."/>
            <person name="Wert S.E."/>
            <person name="Whitsett J.A."/>
            <person name="Dean M."/>
        </authorList>
    </citation>
    <scope>VARIANTS SMDP3 PRO-101; ASP-568; PRO-982; SER-1221; PRO-1553; PRO-1580 AND PRO-1591</scope>
</reference>
<reference key="20">
    <citation type="journal article" date="2005" name="Am. J. Respir. Crit. Care Med.">
        <title>ABCA3 mutations associated with pediatric interstitial lung disease.</title>
        <authorList>
            <person name="Bullard J.E."/>
            <person name="Wert S.E."/>
            <person name="Whitsett J.A."/>
            <person name="Dean M."/>
            <person name="Nogee L.M."/>
        </authorList>
    </citation>
    <scope>VARIANTS SMDP3 VAL-292; LYS-690; LYS-1076; MET-1114; LEU-1301 AND GLU-1302</scope>
</reference>
<reference key="21">
    <citation type="journal article" date="2006" name="Am. J. Respir. Crit. Care Med.">
        <title>Alteration of the pulmonary surfactant system in full-term infants with hereditary ABCA3 deficiency.</title>
        <authorList>
            <person name="Brasch F."/>
            <person name="Schimanski S."/>
            <person name="Muehlfeld C."/>
            <person name="Barlage S."/>
            <person name="Langmann T."/>
            <person name="Aslanidis C."/>
            <person name="Boettcher A."/>
            <person name="Dada A."/>
            <person name="Schroten H."/>
            <person name="Mildenberger E."/>
            <person name="Prueter E."/>
            <person name="Ballmann M."/>
            <person name="Ochs M."/>
            <person name="Johnen G."/>
            <person name="Griese M."/>
            <person name="Schmitz G."/>
        </authorList>
    </citation>
    <scope>VARIANTS SMDP3 LEU-43; LYS-215; PRO-579; GLN-605 AND 1561-ARG--ARG-1704 DEL</scope>
    <scope>VARIANT LYS-288</scope>
</reference>
<reference key="22">
    <citation type="journal article" date="2006" name="Science">
        <title>The consensus coding sequences of human breast and colorectal cancers.</title>
        <authorList>
            <person name="Sjoeblom T."/>
            <person name="Jones S."/>
            <person name="Wood L.D."/>
            <person name="Parsons D.W."/>
            <person name="Lin J."/>
            <person name="Barber T.D."/>
            <person name="Mandelker D."/>
            <person name="Leary R.J."/>
            <person name="Ptak J."/>
            <person name="Silliman N."/>
            <person name="Szabo S."/>
            <person name="Buckhaults P."/>
            <person name="Farrell C."/>
            <person name="Meeh P."/>
            <person name="Markowitz S.D."/>
            <person name="Willis J."/>
            <person name="Dawson D."/>
            <person name="Willson J.K.V."/>
            <person name="Gazdar A.F."/>
            <person name="Hartigan J."/>
            <person name="Wu L."/>
            <person name="Liu C."/>
            <person name="Parmigiani G."/>
            <person name="Park B.H."/>
            <person name="Bachman K.E."/>
            <person name="Papadopoulos N."/>
            <person name="Vogelstein B."/>
            <person name="Kinzler K.W."/>
            <person name="Velculescu V.E."/>
        </authorList>
    </citation>
    <scope>VARIANTS [LARGE SCALE ANALYSIS] MET-290; ASP-801 AND GLN-1069</scope>
</reference>
<reference key="23">
    <citation type="journal article" date="2015" name="J. Perinatol.">
        <title>Respiratory failure in a term infant with cis and trans mutations in ABCA3.</title>
        <authorList>
            <person name="Jackson T."/>
            <person name="Wegner D.J."/>
            <person name="White F.V."/>
            <person name="Hamvas A."/>
            <person name="Cole F.S."/>
            <person name="Wambach J.A."/>
        </authorList>
    </citation>
    <scope>VARIANTS SMDP3 CYS-280; MET-1399 AND 1589-GLN--ARG-1704 DEL</scope>
</reference>
<reference key="24">
    <citation type="journal article" date="2016" name="Pediatr. Pulmonol.">
        <title>Tools to explore ABCA3 mutations causing interstitial lung disease.</title>
        <authorList>
            <person name="Wittmann T."/>
            <person name="Schindlbeck U."/>
            <person name="Hoeppner S."/>
            <person name="Kinting S."/>
            <person name="Frixel S."/>
            <person name="Kroener C."/>
            <person name="Liebisch G."/>
            <person name="Hegermann J."/>
            <person name="Aslanidis C."/>
            <person name="Brasch F."/>
            <person name="Reu S."/>
            <person name="Lasch P."/>
            <person name="Zarbock R."/>
            <person name="Griese M."/>
        </authorList>
    </citation>
    <scope>VARIANT SMDP3 ASN-1388</scope>
    <scope>CHARACTERIZATION OF VARIANT SMDP3 ASN-1388</scope>
    <scope>PROTEOLYTIC CLEAVAGE</scope>
    <scope>GLYCOSYLATION</scope>
    <scope>SUBCELLULAR LOCATION</scope>
    <scope>FUNCTION</scope>
    <scope>CATALYTIC ACTIVITY</scope>
</reference>
<sequence>MAVLRQLALLLWKNYTLQKRKVLVTVLELFLPLLFSGILIWLRLKIQSENVPNATIYPGQSIQELPLFFTFPPPGDTWELAYIPSHSDAAKTVTETVRRALVINMRVRGFPSEKDFEDYIRYDNCSSSVLAAVVFEHPFNHSKEPLPLAVKYHLRFSYTRRNYMWTQTGSFFLKETEGWHTTSLFPLFPNPGPREPTSPDGGEPGYIREGFLAVQHAVDRAIMEYHADAATRQLFQRLTVTIKRFPYPPFIADPFLVAIQYQLPLLLLLSFTYTALTIARAVVQEKERRLKEYMRMMGLSSWLHWSAWFLLFFLFLLIAASFMTLLFCVKVKPNVAVLSRSDPSLVLAFLLCFAISTISFSFMVSTFFSKANMAAAFGGFLYFFTYIPYFFVAPRYNWMTLSQKLCSCLLSNVAMAMGAQLIGKFEAKGMGIQWRDLLSPVNVDDDFCFGQVLGMLLLDSVLYGLVTWYMEAVFPGQFGVPQPWYFFIMPSYWCGKPRAVAGKEEEDSDPEKALRNEYFEAEPEDLVAGIKIKHLSKVFRVGNKDRAAVRDLNLNLYEGQITVLLGHNGAGKTTTLSMLTGLFPPTSGRAYISGYEISQDMVQIRKSLGLCPQHDILFDNLTVAEHLYFYAQLKGLSRQKCPEEVKQMLHIIGLEDKWNSRSRFLSGGMRRKLSIGIALIAGSKVLILDEPTSGMDAISRRAIWDLLQRQKSDRTIVLTTHFMDEADLLGDRIAIMAKGELQCCGSSLFLKQKYGAGYHMTLVKEPHCNPEDISQLVHHHVPNATLESSAGAELSFILPRESTHRFEGLFAKLEKKQKELGIASFGASITTMEEVFLRVGKLVDSSMDIQAIQLPALQYQHERRASDWAVDSNLCGAMDPSDGIGALIEEERTAVKLNTGLALHCQQFWAMFLKKAAYSWREWKMVAAQVLVPLTCVTLALLAINYSSELFDDPMLRLTLGEYGRTVVPFSVPGTSQLGQQLSEHLKDALQAEGQEPREVLGDLEEFLIFRASVEGGGFNERCLVAASFRDVGERTVVNALFNNQAYHSPATALAVVDNLLFKLLCGPHASIVVSNFPQPRSALQAAKDQFNEGRKGFDIALNLLFAMAFLASTFSILAVSERAVQAKHVQFVSGVHVASFWLSALLWDLISFLIPSLLLLVVFKAFDVRAFTRDGHMADTLLLLLLYGWAIIPLMYLMNFFFLGAATAYTRLTIFNILSGIATFLMVTIMRIPAVKLEELSKTLDHVFLVLPNHCLGMAVSSFYENYETRRYCTSSEVAAHYCKKYNIQYQENFYAWSAPGVGRFVASMAASGCAYLILLFLIETNLLQRLRGILCALRRRRTLTELYTRMPVLPEDQDVADERTRILAPSPDSLLHTPLIIKELSKVYEQRVPLLAVDRLSLAVQKGECFGLLGFNGAGKTTTFKMLTGEESLTSGDAFVGGHRISSDVGKVRQRIGYCPQFDALLDHMTGREMLVMYARLRGIPERHIGACVENTLRGLLLEPHANKLVRTYSGGNKRKLSTGIALIGEPAVIFLDEPSTGMDPVARRLLWDTVARARESGKAIIITSHSMEECEALCTRLAIMVQGQFKCLGSPQHLKSKFGSGYSLRAKVQSEGQQEALEEFKAFVDLTFPGSVLEDEHQGMVHYHLPGRDLSWAKVFGILEKAKEKYGVDDYSVSQISLEQVFLSFAHLQPPTAEEGR</sequence>
<gene>
    <name evidence="29" type="primary">ABCA3</name>
    <name type="synonym">ABC3</name>
</gene>
<protein>
    <recommendedName>
        <fullName evidence="26">Phospholipid-transporting ATPase ABCA3</fullName>
        <ecNumber evidence="11 21 22">7.6.2.1</ecNumber>
    </recommendedName>
    <alternativeName>
        <fullName>ABC-C transporter</fullName>
    </alternativeName>
    <alternativeName>
        <fullName evidence="26">ATP-binding cassette sub-family A member 3</fullName>
    </alternativeName>
    <alternativeName>
        <fullName>ATP-binding cassette transporter 3</fullName>
        <shortName>ATP-binding cassette 3</shortName>
    </alternativeName>
    <alternativeName>
        <fullName evidence="26">Xenobiotic-transporting ATPase ABCA3</fullName>
        <ecNumber evidence="27">7.6.2.2</ecNumber>
    </alternativeName>
    <component>
        <recommendedName>
            <fullName evidence="28">150 Kda mature form</fullName>
        </recommendedName>
    </component>
</protein>
<organism>
    <name type="scientific">Homo sapiens</name>
    <name type="common">Human</name>
    <dbReference type="NCBI Taxonomy" id="9606"/>
    <lineage>
        <taxon>Eukaryota</taxon>
        <taxon>Metazoa</taxon>
        <taxon>Chordata</taxon>
        <taxon>Craniata</taxon>
        <taxon>Vertebrata</taxon>
        <taxon>Euteleostomi</taxon>
        <taxon>Mammalia</taxon>
        <taxon>Eutheria</taxon>
        <taxon>Euarchontoglires</taxon>
        <taxon>Primates</taxon>
        <taxon>Haplorrhini</taxon>
        <taxon>Catarrhini</taxon>
        <taxon>Hominidae</taxon>
        <taxon>Homo</taxon>
    </lineage>
</organism>
<keyword id="KW-0002">3D-structure</keyword>
<keyword id="KW-0025">Alternative splicing</keyword>
<keyword id="KW-0067">ATP-binding</keyword>
<keyword id="KW-0968">Cytoplasmic vesicle</keyword>
<keyword id="KW-0225">Disease variant</keyword>
<keyword id="KW-1015">Disulfide bond</keyword>
<keyword id="KW-0967">Endosome</keyword>
<keyword id="KW-0325">Glycoprotein</keyword>
<keyword id="KW-0445">Lipid transport</keyword>
<keyword id="KW-0458">Lysosome</keyword>
<keyword id="KW-0472">Membrane</keyword>
<keyword id="KW-0547">Nucleotide-binding</keyword>
<keyword id="KW-1267">Proteomics identification</keyword>
<keyword id="KW-1185">Reference proteome</keyword>
<keyword id="KW-0677">Repeat</keyword>
<keyword id="KW-1278">Translocase</keyword>
<keyword id="KW-0812">Transmembrane</keyword>
<keyword id="KW-1133">Transmembrane helix</keyword>
<keyword id="KW-0813">Transport</keyword>
<comment type="function">
    <text evidence="9 11 16 17 19 21 22">Catalyzes the ATP-dependent transport of phospholipids such as phosphatidylcholine and phosphoglycerol from the cytoplasm into the lumen side of lamellar bodies, in turn participates in the lamellar bodies biogenesis and homeostasis of pulmonary surfactant (PubMed:16959783, PubMed:17574245, PubMed:27177387, PubMed:28887056, PubMed:31473345). Transports preferentially phosphatidylcholine containing short acyl chains (PubMed:27177387). In addition plays a role as an efflux transporter of miltefosine across macrophage membranes and free cholesterol (FC) through intralumenal vesicles by removing FC from the cell as a component of surfactant and protects cells from free cholesterol toxicity (PubMed:25817392, PubMed:26903515, PubMed:27177387).</text>
</comment>
<comment type="catalytic activity">
    <reaction evidence="27">
        <text>ATP + H2O + xenobioticSide 1 = ADP + phosphate + xenobioticSide 2.</text>
        <dbReference type="EC" id="7.6.2.2"/>
    </reaction>
</comment>
<comment type="catalytic activity">
    <reaction evidence="11 19 21 22">
        <text>a 1,2-diacyl-sn-glycero-3-phosphocholine(in) + ATP + H2O = a 1,2-diacyl-sn-glycero-3-phosphocholine(out) + ADP + phosphate + H(+)</text>
        <dbReference type="Rhea" id="RHEA:66272"/>
        <dbReference type="ChEBI" id="CHEBI:15377"/>
        <dbReference type="ChEBI" id="CHEBI:15378"/>
        <dbReference type="ChEBI" id="CHEBI:30616"/>
        <dbReference type="ChEBI" id="CHEBI:43474"/>
        <dbReference type="ChEBI" id="CHEBI:57643"/>
        <dbReference type="ChEBI" id="CHEBI:456216"/>
    </reaction>
    <physiologicalReaction direction="left-to-right" evidence="11 19 21 22">
        <dbReference type="Rhea" id="RHEA:66273"/>
    </physiologicalReaction>
</comment>
<comment type="catalytic activity">
    <reaction evidence="11 19 21 22">
        <text>ATP + H2O + phospholipidSide 1 = ADP + phosphate + phospholipidSide 2.</text>
        <dbReference type="EC" id="7.6.2.1"/>
    </reaction>
</comment>
<comment type="catalytic activity">
    <reaction evidence="19">
        <text>1,2-dihexadecanoyl-sn-glycero-3-phosphocholine(in) + ATP + H2O = 1,2-dihexadecanoyl-sn-glycero-3-phosphocholine(out) + ADP + phosphate + H(+)</text>
        <dbReference type="Rhea" id="RHEA:66340"/>
        <dbReference type="ChEBI" id="CHEBI:15377"/>
        <dbReference type="ChEBI" id="CHEBI:15378"/>
        <dbReference type="ChEBI" id="CHEBI:30616"/>
        <dbReference type="ChEBI" id="CHEBI:43474"/>
        <dbReference type="ChEBI" id="CHEBI:72999"/>
        <dbReference type="ChEBI" id="CHEBI:456216"/>
    </reaction>
    <physiologicalReaction direction="left-to-right" evidence="19">
        <dbReference type="Rhea" id="RHEA:66341"/>
    </physiologicalReaction>
</comment>
<comment type="catalytic activity">
    <reaction evidence="16">
        <text>cholesterol(in) + ATP + H2O = cholesterol(out) + ADP + phosphate + H(+)</text>
        <dbReference type="Rhea" id="RHEA:39051"/>
        <dbReference type="ChEBI" id="CHEBI:15377"/>
        <dbReference type="ChEBI" id="CHEBI:15378"/>
        <dbReference type="ChEBI" id="CHEBI:16113"/>
        <dbReference type="ChEBI" id="CHEBI:30616"/>
        <dbReference type="ChEBI" id="CHEBI:43474"/>
        <dbReference type="ChEBI" id="CHEBI:456216"/>
    </reaction>
    <physiologicalReaction direction="left-to-right" evidence="16">
        <dbReference type="Rhea" id="RHEA:39052"/>
    </physiologicalReaction>
</comment>
<comment type="catalytic activity">
    <reaction evidence="2">
        <text>a 1,2-diacyl-sn-glycero-3-phospho-(1'-sn-glycerol)(in) + ATP + H2O = a 1,2-diacyl-sn-glycero-3-phospho-(1'-sn-glycerol)(out) + ADP + phosphate + H(+)</text>
        <dbReference type="Rhea" id="RHEA:66344"/>
        <dbReference type="ChEBI" id="CHEBI:15377"/>
        <dbReference type="ChEBI" id="CHEBI:15378"/>
        <dbReference type="ChEBI" id="CHEBI:30616"/>
        <dbReference type="ChEBI" id="CHEBI:43474"/>
        <dbReference type="ChEBI" id="CHEBI:64716"/>
        <dbReference type="ChEBI" id="CHEBI:456216"/>
    </reaction>
    <physiologicalReaction direction="left-to-right" evidence="2">
        <dbReference type="Rhea" id="RHEA:66345"/>
    </physiologicalReaction>
</comment>
<comment type="activity regulation">
    <text evidence="22">The ATP-dependent phosphatidylcholine transport is competitively inhibited by miltefosine.</text>
</comment>
<comment type="subunit">
    <text evidence="22">Homooligomer; disulfide-linked.</text>
</comment>
<comment type="subcellular location">
    <subcellularLocation>
        <location evidence="9 12 19">Endosome</location>
        <location evidence="9 12 19">Multivesicular body membrane</location>
        <topology evidence="26">Multi-pass membrane protein</topology>
    </subcellularLocation>
    <subcellularLocation>
        <location evidence="9 11 12 13 19 22">Cytoplasmic vesicle membrane</location>
    </subcellularLocation>
    <subcellularLocation>
        <location evidence="19">Late endosome membrane</location>
    </subcellularLocation>
    <subcellularLocation>
        <location evidence="9 11 12 14">Lysosome membrane</location>
    </subcellularLocation>
    <text evidence="5 9 12 13 14 19 20">Localized in the limiting membrane of lamellar bodies in lung alveolar type II cells (PubMed:11718719, PubMed:16959783, PubMed:22673903, PubMed:24142515, PubMed:27177387). Trafficks via the Golgi, sorting vesicles (SVs) and late endosome/multivesicular body network directly to the outer membrane of lamellar bodies in AT2 lung epithelial cells or to lysosomes and lysosomal-related organelles (LROs) in other cells where undergoes proteolytic cleavage and oligosaccharide processing from high mannose type to complex type (PubMed:16959783, PubMed:20863830, PubMed:24142515, PubMed:27177387). Oligomers formation takes place in a post-endoplasmic reticulum compartment (PubMed:27352740).</text>
</comment>
<comment type="alternative products">
    <event type="alternative splicing"/>
    <isoform>
        <id>Q99758-1</id>
        <name>1</name>
        <sequence type="displayed"/>
    </isoform>
    <isoform>
        <id>Q99758-2</id>
        <name>2</name>
        <sequence type="described" ref="VSP_056262 VSP_056263"/>
    </isoform>
</comment>
<comment type="tissue specificity">
    <text evidence="5 23">Expressed in brain, pancreas, skeletal muscle and heart (PubMed:8706931). Highly expressed in the lung in an AT2-cell-specific manner (PubMed:11718719, PubMed:8706931). Weakly expressed in placenta, kidney and liver (PubMed:8706931). Also expressed in medullary thyroid carcinoma cells (MTC) and in C-cell carcinoma (PubMed:8706931).</text>
</comment>
<comment type="induction">
    <text evidence="17">Up-regulated in Leishmania Viannia (L.V.) panamensis-infected macrophages exposed to miltefosine (PubMed:26903515). Down-regulated by L.V.panamensis infection (PubMed:26903515).</text>
</comment>
<comment type="domain">
    <text evidence="1">Multifunctional polypeptide with two homologous halves, each containing a hydrophobic membrane-anchoring domain and an ATP binding cassette (ABC) domain.</text>
</comment>
<comment type="PTM">
    <text evidence="9 14 19">N-glycosylated (PubMed:16959783, PubMed:24142515, PubMed:27177387). Localization at intracellular vesicles is accompanied by processing of oligosaccharide from high mannose type to complex type (PubMed:16959783, PubMed:27177387). N-linked glycosylation at Asn-124 and Asn-140 is required for stability and efficient anterograde trafficking and prevents from proteasomal degradation (PubMed:24142515).</text>
</comment>
<comment type="PTM">
    <text evidence="9 12 18 19">Proteolytically cleaved by CTSL and to a lower extent by CTSB within multivesicular bodies (MVB) and lamellar bodies (LB) leading to a mature form of 150 kDa.</text>
</comment>
<comment type="disease" evidence="6 7 8 9 11 12 15 16 19 20 21 22">
    <disease id="DI-00962">
        <name>Pulmonary surfactant metabolism dysfunction 3</name>
        <acronym>SMDP3</acronym>
        <description>A rare lung disorder due to impaired surfactant homeostasis. It is characterized by alveolar filling with floccular material that stains positive using the periodic acid-Schiff method and is derived from surfactant phospholipids and protein components. Excessive lipoproteins accumulation in the alveoli results in severe respiratory distress.</description>
        <dbReference type="MIM" id="610921"/>
    </disease>
    <text>The disease is caused by variants affecting the gene represented in this entry.</text>
</comment>
<comment type="similarity">
    <text evidence="26">Belongs to the ABC transporter superfamily. ABCA family.</text>
</comment>
<comment type="online information" name="ABCMdb">
    <link uri="http://abcm2.hegelab.org/search"/>
    <text>Database for mutations in ABC proteins</text>
</comment>
<proteinExistence type="evidence at protein level"/>
<feature type="chain" id="PRO_0000093293" description="Phospholipid-transporting ATPase ABCA3">
    <location>
        <begin position="1"/>
        <end position="1704"/>
    </location>
</feature>
<feature type="chain" id="PRO_0000452297" description="150 Kda mature form" evidence="28">
    <location>
        <begin position="175"/>
        <end position="1704"/>
    </location>
</feature>
<feature type="transmembrane region" description="Helical" evidence="3">
    <location>
        <begin position="22"/>
        <end position="42"/>
    </location>
</feature>
<feature type="transmembrane region" description="Helical" evidence="3">
    <location>
        <begin position="261"/>
        <end position="283"/>
    </location>
</feature>
<feature type="transmembrane region" description="Helical" evidence="3">
    <location>
        <begin position="307"/>
        <end position="327"/>
    </location>
</feature>
<feature type="transmembrane region" description="Helical" evidence="3">
    <location>
        <begin position="344"/>
        <end position="364"/>
    </location>
</feature>
<feature type="transmembrane region" description="Helical" evidence="3">
    <location>
        <begin position="373"/>
        <end position="393"/>
    </location>
</feature>
<feature type="transmembrane region" description="Helical" evidence="3">
    <location>
        <begin position="405"/>
        <end position="425"/>
    </location>
</feature>
<feature type="transmembrane region" description="Helical" evidence="3">
    <location>
        <begin position="447"/>
        <end position="467"/>
    </location>
</feature>
<feature type="transmembrane region" description="Helical" evidence="3">
    <location>
        <begin position="925"/>
        <end position="945"/>
    </location>
</feature>
<feature type="transmembrane region" description="Helical" evidence="3">
    <location>
        <begin position="1100"/>
        <end position="1120"/>
    </location>
</feature>
<feature type="transmembrane region" description="Helical" evidence="3">
    <location>
        <begin position="1144"/>
        <end position="1164"/>
    </location>
</feature>
<feature type="transmembrane region" description="Helical" evidence="3">
    <location>
        <begin position="1183"/>
        <end position="1203"/>
    </location>
</feature>
<feature type="transmembrane region" description="Helical" evidence="3">
    <location>
        <begin position="1213"/>
        <end position="1233"/>
    </location>
</feature>
<feature type="transmembrane region" description="Helical" evidence="3">
    <location>
        <begin position="1245"/>
        <end position="1265"/>
    </location>
</feature>
<feature type="transmembrane region" description="Helical" evidence="3">
    <location>
        <begin position="1306"/>
        <end position="1326"/>
    </location>
</feature>
<feature type="domain" description="ABC transporter 1" evidence="4">
    <location>
        <begin position="530"/>
        <end position="763"/>
    </location>
</feature>
<feature type="domain" description="ABC transporter 2" evidence="4">
    <location>
        <begin position="1381"/>
        <end position="1614"/>
    </location>
</feature>
<feature type="binding site" evidence="4">
    <location>
        <begin position="566"/>
        <end position="573"/>
    </location>
    <ligand>
        <name>ATP</name>
        <dbReference type="ChEBI" id="CHEBI:30616"/>
        <label>1</label>
    </ligand>
</feature>
<feature type="binding site" evidence="4">
    <location>
        <begin position="1416"/>
        <end position="1423"/>
    </location>
    <ligand>
        <name>ATP</name>
        <dbReference type="ChEBI" id="CHEBI:30616"/>
        <label>2</label>
    </ligand>
</feature>
<feature type="site" description="Cleavage; by CTSL" evidence="18">
    <location>
        <begin position="174"/>
        <end position="175"/>
    </location>
</feature>
<feature type="glycosylation site" description="N-linked (GlcNAc...) asparagine" evidence="3">
    <location>
        <position position="14"/>
    </location>
</feature>
<feature type="glycosylation site" description="N-linked (GlcNAc...) asparagine" evidence="3">
    <location>
        <position position="53"/>
    </location>
</feature>
<feature type="glycosylation site" description="N-linked (GlcNAc...) asparagine" evidence="3 14">
    <location>
        <position position="124"/>
    </location>
</feature>
<feature type="glycosylation site" description="N-linked (GlcNAc...) asparagine" evidence="3 14">
    <location>
        <position position="140"/>
    </location>
</feature>
<feature type="glycosylation site" description="N-linked (GlcNAc...) asparagine" evidence="3">
    <location>
        <position position="620"/>
    </location>
</feature>
<feature type="glycosylation site" description="N-linked (GlcNAc...) asparagine" evidence="3">
    <location>
        <position position="783"/>
    </location>
</feature>
<feature type="splice variant" id="VSP_056262" description="In isoform 2." evidence="25">
    <original>YIRE</original>
    <variation>EKLG</variation>
    <location>
        <begin position="206"/>
        <end position="209"/>
    </location>
</feature>
<feature type="splice variant" id="VSP_056263" description="In isoform 2." evidence="25">
    <location>
        <begin position="210"/>
        <end position="1704"/>
    </location>
</feature>
<feature type="sequence variant" id="VAR_084240" description="In SMDP3; uncertain significance." evidence="8">
    <original>R</original>
    <variation>L</variation>
    <location>
        <position position="43"/>
    </location>
</feature>
<feature type="sequence variant" id="VAR_023497" description="In SMDP3; loss of intracellular vesicle membrane location; loss of proteolytic cleavage; does not affect N-glycosylation; loss of ATP hydrolysis activity; decreases ATP binding in vitro; dbSNP:rs121909182." evidence="6 9">
    <original>L</original>
    <variation>P</variation>
    <location>
        <position position="101"/>
    </location>
</feature>
<feature type="sequence variant" id="VAR_025061" description="In dbSNP:rs45447801." evidence="24">
    <original>N</original>
    <variation>H</variation>
    <location>
        <position position="140"/>
    </location>
</feature>
<feature type="sequence variant" id="VAR_084241" description="In SMDP3; loss of lamellar bodies membrane location; loss of proteolytic cleavage; increases cellular free cholesterol and phosphatidylcholine transport; loss of vesicles formation; increases free cholesterol induced cell death; loss of protein oligomerization; dbSNP:rs879159551." evidence="8 12 16 20">
    <original>Q</original>
    <variation>K</variation>
    <location>
        <position position="215"/>
    </location>
</feature>
<feature type="sequence variant" id="VAR_084242" description="In SMDP3; uncertain significance; does not affect protein oligomerization; dbSNP:rs201299260." evidence="15 20">
    <original>R</original>
    <variation>C</variation>
    <location>
        <position position="280"/>
    </location>
</feature>
<feature type="sequence variant" id="VAR_084243" description="In SMDP3; uncertain significance; does not affect protein oligomerization; dbSNP:rs117603931." evidence="8 20">
    <original>R</original>
    <variation>K</variation>
    <location>
        <position position="288"/>
    </location>
</feature>
<feature type="sequence variant" id="VAR_035728" description="In a breast cancer sample; somatic mutation." evidence="10">
    <original>L</original>
    <variation>M</variation>
    <location>
        <position position="290"/>
    </location>
</feature>
<feature type="sequence variant" id="VAR_084244" description="In SMDP3; uncertain significance; does not affect lamellar bodies membrane location; does not affect proteolytic cleavage; affects lamellar bodies formation; does not affect cholesterol and phosphatidylcholine transport; decreases vesicles formation; does not affect free cholesterol induced cell death; dbSNP:rs149989682." evidence="7 12 16 21">
    <original>E</original>
    <variation>V</variation>
    <location>
        <position position="292"/>
    </location>
</feature>
<feature type="sequence variant" id="VAR_023498" description="In SMDP3; does not affect location in intracellular vesicle membrane; does not affect proteolytic cleavage; does not affect N-glycosylation; loss of ATP hydrolysis activity; decreases ATP binding in vitro; does not affect protein expression; does not affect multivesicular bodies and lamellar bodies location; affects multivesicular bodies and lamellar bodies development; loss of phosphatidylcholine transport; does not affect cholesterol transport; dbSNP:rs121909184." evidence="6 9 11 22">
    <original>N</original>
    <variation>D</variation>
    <location>
        <position position="568"/>
    </location>
</feature>
<feature type="sequence variant" id="VAR_084245" description="In SMDP3; uncertain significance." evidence="8">
    <original>L</original>
    <variation>P</variation>
    <location>
        <position position="579"/>
    </location>
</feature>
<feature type="sequence variant" id="VAR_084246" description="In SMDP3; uncertain significance; dbSNP:rs760006956." evidence="8">
    <original>R</original>
    <variation>Q</variation>
    <location>
        <position position="605"/>
    </location>
</feature>
<feature type="sequence variant" id="VAR_084247" description="In SMDP3; dbSNP:rs2141707325." evidence="7">
    <original>E</original>
    <variation>K</variation>
    <location>
        <position position="690"/>
    </location>
</feature>
<feature type="sequence variant" id="VAR_025062" description="In dbSNP:rs45592239." evidence="24">
    <original>P</original>
    <variation>S</variation>
    <location>
        <position position="766"/>
    </location>
</feature>
<feature type="sequence variant" id="VAR_035729" description="In a breast cancer sample; somatic mutation." evidence="10">
    <original>E</original>
    <variation>D</variation>
    <location>
        <position position="801"/>
    </location>
</feature>
<feature type="sequence variant" id="VAR_084248" description="In SMDP3; loss of intracellular vesicle membrane location; loss of proteolytic cleavage; does not affect N-glycosylation; dbSNP:rs1402761450." evidence="6 9">
    <original>L</original>
    <variation>P</variation>
    <location>
        <position position="982"/>
    </location>
</feature>
<feature type="sequence variant" id="VAR_035730" description="In a breast cancer sample; somatic mutation." evidence="10">
    <original>H</original>
    <variation>Q</variation>
    <location>
        <position position="1069"/>
    </location>
</feature>
<feature type="sequence variant" id="VAR_084249" description="In SMDP3; uncertain significance; dbSNP:rs2093663770." evidence="7">
    <original>N</original>
    <variation>K</variation>
    <location>
        <position position="1076"/>
    </location>
</feature>
<feature type="sequence variant" id="VAR_084250" description="In SMDP3; dbSNP:rs891579143." evidence="7">
    <original>T</original>
    <variation>M</variation>
    <location>
        <position position="1114"/>
    </location>
</feature>
<feature type="sequence variant" id="VAR_084251" description="In SMDP3; does not affect intracellular vesicle membrane location; does not affect proteolytic cleavage; does not affect N-glycosylation; loss of ATP hydrolysis activity." evidence="6 9">
    <original>G</original>
    <variation>S</variation>
    <location>
        <position position="1221"/>
    </location>
</feature>
<feature type="sequence variant" id="VAR_084252" description="In SMDP3; dbSNP:rs762699052." evidence="7">
    <original>P</original>
    <variation>L</variation>
    <location>
        <position position="1301"/>
    </location>
</feature>
<feature type="sequence variant" id="VAR_084253" description="In SMDP3; uncertain significance; dbSNP:rs2093657978." evidence="7">
    <original>G</original>
    <variation>E</variation>
    <location>
        <position position="1302"/>
    </location>
</feature>
<feature type="sequence variant" id="VAR_084254" description="In SMDP3; decreases phosphatidylcholine transport; increases protein abundance; does not affect folding in the endoplasmic reticulum; decreases proteolytic processing; affects lamellar bodies development; reduces free cholesterol transport." evidence="19 21">
    <original>K</original>
    <variation>N</variation>
    <location>
        <position position="1388"/>
    </location>
</feature>
<feature type="sequence variant" id="VAR_084255" description="In SMDP3; dbSNP:rs763166660." evidence="15">
    <original>V</original>
    <variation>M</variation>
    <location>
        <position position="1399"/>
    </location>
</feature>
<feature type="sequence variant" id="VAR_023499" description="In SMDP3; loss of intracellular vesicle membrane location; loss of proteolytic cleavage; does not affect N-glycosylation; dbSNP:rs121909183." evidence="6 9">
    <original>L</original>
    <variation>P</variation>
    <location>
        <position position="1553"/>
    </location>
</feature>
<feature type="sequence variant" id="VAR_084256" description="In SMDP3." evidence="8">
    <location>
        <begin position="1561"/>
        <end position="1704"/>
    </location>
</feature>
<feature type="sequence variant" id="VAR_084257" description="In SMDP3; does not affect location in intracellular vesicle membrane; does not affect proteolytic cleavage; does not affect N-glycosylation; loss of ATP hydrolysis activity; decreases ATP binding in vitro; affects the intracellular vesicles development; decreases phosphatidylcholine transport." evidence="6 9 22">
    <original>L</original>
    <variation>P</variation>
    <location>
        <position position="1580"/>
    </location>
</feature>
<feature type="sequence variant" id="VAR_084258" description="In SMDP3." evidence="15">
    <location>
        <begin position="1589"/>
        <end position="1704"/>
    </location>
</feature>
<feature type="sequence variant" id="VAR_023500" description="In SMDP3; loss of intracellular vesicle membrane location; loss of proteolytic cleavage; does not affect N-glycosylation; dbSNP:rs28936691." evidence="6 9">
    <original>Q</original>
    <variation>P</variation>
    <location>
        <position position="1591"/>
    </location>
</feature>
<feature type="mutagenesis site" description="Does not affect N-glycosylation. Does not affect protein expression. Does not affect lamellar body membrane location." evidence="14">
    <original>N</original>
    <variation>Q</variation>
    <location>
        <position position="53"/>
    </location>
</feature>
<feature type="mutagenesis site" description="Loss of N-glycosylation. Reduces protein expression by 50%. Affects anterograde trafficking; when associated with Q-140. Reduces protein expression by 85%; when associated with Q-140. Does not affect lamellar body membrane location." evidence="14">
    <original>N</original>
    <variation>Q</variation>
    <location>
        <position position="124"/>
    </location>
</feature>
<feature type="mutagenesis site" description="Loss of N-glycosylation. Reduces protein expression by 50%. Affects anterograde trafficking; when associated with Q-124. Reduces protein expression by 85%; when associated with Q-140. Does not affect lamellar body membrane location." evidence="14">
    <original>N</original>
    <variation>Q</variation>
    <location>
        <position position="140"/>
    </location>
</feature>
<feature type="mutagenesis site" description="Loss of proteolytic processing." evidence="18">
    <original>LK</original>
    <variation>AA</variation>
    <location>
        <begin position="173"/>
        <end position="174"/>
    </location>
</feature>
<feature type="mutagenesis site" description="Does not affect protein oligomerization." evidence="20">
    <original>S</original>
    <variation>L</variation>
    <location>
        <position position="693"/>
    </location>
</feature>
<feature type="mutagenesis site" description="Does not affect lamellar body membrane location. Does not affect protein expression. Does not affect proteolytic processing." evidence="14">
    <original>N</original>
    <variation>Q</variation>
    <location>
        <position position="945"/>
    </location>
</feature>
<feature type="mutagenesis site" description="Decreases ATP hydrolysis activity of 15% compared to the wild-type." evidence="9">
    <original>G</original>
    <variation>A</variation>
    <location>
        <position position="1221"/>
    </location>
</feature>
<feature type="mutagenesis site" description="Decreases ATP hydrolysis activity of 36% compared to the wild-type." evidence="9">
    <original>G</original>
    <variation>T</variation>
    <location>
        <position position="1221"/>
    </location>
</feature>
<feature type="mutagenesis site" description="Decreases ATP hydrolysis activity of 18% compared to the wild-type." evidence="9">
    <original>G</original>
    <variation>V</variation>
    <location>
        <position position="1221"/>
    </location>
</feature>
<feature type="mutagenesis site" description="Decreases ATP hydrolysis activity of 13% compared to the wild-type." evidence="9">
    <original>L</original>
    <variation>A</variation>
    <location>
        <position position="1580"/>
    </location>
</feature>
<feature type="mutagenesis site" description="Decreases ATP hydrolysis activity of 13% compared to the wild-type." evidence="9">
    <original>L</original>
    <variation>F</variation>
    <location>
        <position position="1580"/>
    </location>
</feature>
<feature type="mutagenesis site" description="Decreases ATP hydrolysis activity of 56% compared to the wild-type." evidence="9">
    <original>L</original>
    <variation>V</variation>
    <location>
        <position position="1580"/>
    </location>
</feature>
<feature type="sequence conflict" description="In Ref. 1; AAC50967." evidence="26" ref="1">
    <original>S</original>
    <variation>P</variation>
    <location>
        <position position="36"/>
    </location>
</feature>
<feature type="sequence conflict" description="In Ref. 1; AAC50967." evidence="26" ref="1">
    <original>P</original>
    <variation>L</variation>
    <location>
        <position position="196"/>
    </location>
</feature>
<feature type="helix" evidence="30">
    <location>
        <begin position="3"/>
        <end position="19"/>
    </location>
</feature>
<feature type="helix" evidence="30">
    <location>
        <begin position="22"/>
        <end position="29"/>
    </location>
</feature>
<feature type="turn" evidence="30">
    <location>
        <begin position="32"/>
        <end position="36"/>
    </location>
</feature>
<feature type="helix" evidence="30">
    <location>
        <begin position="38"/>
        <end position="44"/>
    </location>
</feature>
<feature type="strand" evidence="30">
    <location>
        <begin position="59"/>
        <end position="61"/>
    </location>
</feature>
<feature type="strand" evidence="30">
    <location>
        <begin position="69"/>
        <end position="71"/>
    </location>
</feature>
<feature type="strand" evidence="30">
    <location>
        <begin position="74"/>
        <end position="76"/>
    </location>
</feature>
<feature type="strand" evidence="30">
    <location>
        <begin position="79"/>
        <end position="83"/>
    </location>
</feature>
<feature type="helix" evidence="30">
    <location>
        <begin position="88"/>
        <end position="98"/>
    </location>
</feature>
<feature type="strand" evidence="30">
    <location>
        <begin position="106"/>
        <end position="109"/>
    </location>
</feature>
<feature type="helix" evidence="30">
    <location>
        <begin position="113"/>
        <end position="121"/>
    </location>
</feature>
<feature type="strand" evidence="30">
    <location>
        <begin position="128"/>
        <end position="133"/>
    </location>
</feature>
<feature type="helix" evidence="31">
    <location>
        <begin position="140"/>
        <end position="142"/>
    </location>
</feature>
<feature type="strand" evidence="30">
    <location>
        <begin position="148"/>
        <end position="152"/>
    </location>
</feature>
<feature type="strand" evidence="30">
    <location>
        <begin position="194"/>
        <end position="197"/>
    </location>
</feature>
<feature type="strand" evidence="30">
    <location>
        <begin position="206"/>
        <end position="209"/>
    </location>
</feature>
<feature type="helix" evidence="30">
    <location>
        <begin position="211"/>
        <end position="224"/>
    </location>
</feature>
<feature type="helix" evidence="30">
    <location>
        <begin position="230"/>
        <end position="236"/>
    </location>
</feature>
<feature type="strand" evidence="30">
    <location>
        <begin position="237"/>
        <end position="244"/>
    </location>
</feature>
<feature type="helix" evidence="30">
    <location>
        <begin position="255"/>
        <end position="271"/>
    </location>
</feature>
<feature type="turn" evidence="30">
    <location>
        <begin position="272"/>
        <end position="276"/>
    </location>
</feature>
<feature type="helix" evidence="30">
    <location>
        <begin position="277"/>
        <end position="287"/>
    </location>
</feature>
<feature type="helix" evidence="30">
    <location>
        <begin position="290"/>
        <end position="295"/>
    </location>
</feature>
<feature type="turn" evidence="30">
    <location>
        <begin position="296"/>
        <end position="298"/>
    </location>
</feature>
<feature type="helix" evidence="30">
    <location>
        <begin position="303"/>
        <end position="327"/>
    </location>
</feature>
<feature type="strand" evidence="30">
    <location>
        <begin position="336"/>
        <end position="338"/>
    </location>
</feature>
<feature type="helix" evidence="30">
    <location>
        <begin position="343"/>
        <end position="364"/>
    </location>
</feature>
<feature type="helix" evidence="30">
    <location>
        <begin position="371"/>
        <end position="377"/>
    </location>
</feature>
<feature type="helix" evidence="30">
    <location>
        <begin position="380"/>
        <end position="384"/>
    </location>
</feature>
<feature type="helix" evidence="30">
    <location>
        <begin position="387"/>
        <end position="389"/>
    </location>
</feature>
<feature type="turn" evidence="30">
    <location>
        <begin position="390"/>
        <end position="392"/>
    </location>
</feature>
<feature type="helix" evidence="31">
    <location>
        <begin position="394"/>
        <end position="396"/>
    </location>
</feature>
<feature type="helix" evidence="30">
    <location>
        <begin position="401"/>
        <end position="407"/>
    </location>
</feature>
<feature type="helix" evidence="30">
    <location>
        <begin position="411"/>
        <end position="426"/>
    </location>
</feature>
<feature type="strand" evidence="30">
    <location>
        <begin position="437"/>
        <end position="439"/>
    </location>
</feature>
<feature type="strand" evidence="30">
    <location>
        <begin position="441"/>
        <end position="444"/>
    </location>
</feature>
<feature type="helix" evidence="30">
    <location>
        <begin position="450"/>
        <end position="473"/>
    </location>
</feature>
<feature type="strand" evidence="30">
    <location>
        <begin position="477"/>
        <end position="479"/>
    </location>
</feature>
<feature type="turn" evidence="30">
    <location>
        <begin position="484"/>
        <end position="487"/>
    </location>
</feature>
<feature type="strand" evidence="30">
    <location>
        <begin position="524"/>
        <end position="526"/>
    </location>
</feature>
<feature type="strand" evidence="30">
    <location>
        <begin position="528"/>
        <end position="537"/>
    </location>
</feature>
<feature type="strand" evidence="30">
    <location>
        <begin position="540"/>
        <end position="542"/>
    </location>
</feature>
<feature type="strand" evidence="30">
    <location>
        <begin position="549"/>
        <end position="552"/>
    </location>
</feature>
<feature type="strand" evidence="30">
    <location>
        <begin position="555"/>
        <end position="564"/>
    </location>
</feature>
<feature type="strand" evidence="30">
    <location>
        <begin position="568"/>
        <end position="574"/>
    </location>
</feature>
<feature type="helix" evidence="30">
    <location>
        <begin position="575"/>
        <end position="580"/>
    </location>
</feature>
<feature type="strand" evidence="30">
    <location>
        <begin position="589"/>
        <end position="595"/>
    </location>
</feature>
<feature type="turn" evidence="30">
    <location>
        <begin position="597"/>
        <end position="599"/>
    </location>
</feature>
<feature type="helix" evidence="30">
    <location>
        <begin position="601"/>
        <end position="604"/>
    </location>
</feature>
<feature type="turn" evidence="30">
    <location>
        <begin position="605"/>
        <end position="607"/>
    </location>
</feature>
<feature type="strand" evidence="30">
    <location>
        <begin position="609"/>
        <end position="611"/>
    </location>
</feature>
<feature type="helix" evidence="30">
    <location>
        <begin position="623"/>
        <end position="633"/>
    </location>
</feature>
<feature type="helix" evidence="30">
    <location>
        <begin position="642"/>
        <end position="651"/>
    </location>
</feature>
<feature type="turn" evidence="30">
    <location>
        <begin position="656"/>
        <end position="659"/>
    </location>
</feature>
<feature type="turn" evidence="31">
    <location>
        <begin position="662"/>
        <end position="664"/>
    </location>
</feature>
<feature type="strand" evidence="30">
    <location>
        <begin position="667"/>
        <end position="669"/>
    </location>
</feature>
<feature type="helix" evidence="30">
    <location>
        <begin position="670"/>
        <end position="678"/>
    </location>
</feature>
<feature type="turn" evidence="30">
    <location>
        <begin position="679"/>
        <end position="681"/>
    </location>
</feature>
<feature type="strand" evidence="30">
    <location>
        <begin position="684"/>
        <end position="688"/>
    </location>
</feature>
<feature type="strand" evidence="31">
    <location>
        <begin position="692"/>
        <end position="694"/>
    </location>
</feature>
<feature type="helix" evidence="30">
    <location>
        <begin position="699"/>
        <end position="709"/>
    </location>
</feature>
<feature type="strand" evidence="30">
    <location>
        <begin position="714"/>
        <end position="718"/>
    </location>
</feature>
<feature type="helix" evidence="30">
    <location>
        <begin position="725"/>
        <end position="728"/>
    </location>
</feature>
<feature type="strand" evidence="30">
    <location>
        <begin position="731"/>
        <end position="745"/>
    </location>
</feature>
<feature type="helix" evidence="30">
    <location>
        <begin position="747"/>
        <end position="754"/>
    </location>
</feature>
<feature type="strand" evidence="31">
    <location>
        <begin position="757"/>
        <end position="761"/>
    </location>
</feature>
<feature type="helix" evidence="30">
    <location>
        <begin position="770"/>
        <end position="780"/>
    </location>
</feature>
<feature type="strand" evidence="30">
    <location>
        <begin position="781"/>
        <end position="783"/>
    </location>
</feature>
<feature type="strand" evidence="30">
    <location>
        <begin position="786"/>
        <end position="788"/>
    </location>
</feature>
<feature type="strand" evidence="31">
    <location>
        <begin position="796"/>
        <end position="798"/>
    </location>
</feature>
<feature type="helix" evidence="30">
    <location>
        <begin position="800"/>
        <end position="802"/>
    </location>
</feature>
<feature type="helix" evidence="30">
    <location>
        <begin position="806"/>
        <end position="815"/>
    </location>
</feature>
<feature type="turn" evidence="30">
    <location>
        <begin position="818"/>
        <end position="821"/>
    </location>
</feature>
<feature type="strand" evidence="31">
    <location>
        <begin position="826"/>
        <end position="830"/>
    </location>
</feature>
<feature type="helix" evidence="30">
    <location>
        <begin position="832"/>
        <end position="842"/>
    </location>
</feature>
<feature type="turn" evidence="30">
    <location>
        <begin position="847"/>
        <end position="851"/>
    </location>
</feature>
<feature type="helix" evidence="30">
    <location>
        <begin position="901"/>
        <end position="916"/>
    </location>
</feature>
<feature type="strand" evidence="30">
    <location>
        <begin position="919"/>
        <end position="922"/>
    </location>
</feature>
<feature type="turn" evidence="30">
    <location>
        <begin position="923"/>
        <end position="929"/>
    </location>
</feature>
<feature type="helix" evidence="30">
    <location>
        <begin position="931"/>
        <end position="942"/>
    </location>
</feature>
<feature type="turn" evidence="30">
    <location>
        <begin position="943"/>
        <end position="945"/>
    </location>
</feature>
<feature type="strand" evidence="31">
    <location>
        <begin position="957"/>
        <end position="959"/>
    </location>
</feature>
<feature type="strand" evidence="31">
    <location>
        <begin position="962"/>
        <end position="965"/>
    </location>
</feature>
<feature type="strand" evidence="31">
    <location>
        <begin position="967"/>
        <end position="971"/>
    </location>
</feature>
<feature type="strand" evidence="30">
    <location>
        <begin position="975"/>
        <end position="979"/>
    </location>
</feature>
<feature type="helix" evidence="30">
    <location>
        <begin position="980"/>
        <end position="987"/>
    </location>
</feature>
<feature type="strand" evidence="30">
    <location>
        <begin position="991"/>
        <end position="993"/>
    </location>
</feature>
<feature type="strand" evidence="31">
    <location>
        <begin position="996"/>
        <end position="999"/>
    </location>
</feature>
<feature type="helix" evidence="30">
    <location>
        <begin position="1005"/>
        <end position="1014"/>
    </location>
</feature>
<feature type="helix" evidence="30">
    <location>
        <begin position="1019"/>
        <end position="1022"/>
    </location>
</feature>
<feature type="strand" evidence="30">
    <location>
        <begin position="1028"/>
        <end position="1032"/>
    </location>
</feature>
<feature type="strand" evidence="30">
    <location>
        <begin position="1035"/>
        <end position="1042"/>
    </location>
</feature>
<feature type="strand" evidence="30">
    <location>
        <begin position="1046"/>
        <end position="1048"/>
    </location>
</feature>
<feature type="helix" evidence="30">
    <location>
        <begin position="1049"/>
        <end position="1064"/>
    </location>
</feature>
<feature type="strand" evidence="30">
    <location>
        <begin position="1071"/>
        <end position="1073"/>
    </location>
</feature>
<feature type="helix" evidence="30">
    <location>
        <begin position="1083"/>
        <end position="1089"/>
    </location>
</feature>
<feature type="turn" evidence="30">
    <location>
        <begin position="1090"/>
        <end position="1092"/>
    </location>
</feature>
<feature type="helix" evidence="30">
    <location>
        <begin position="1097"/>
        <end position="1105"/>
    </location>
</feature>
<feature type="turn" evidence="30">
    <location>
        <begin position="1109"/>
        <end position="1111"/>
    </location>
</feature>
<feature type="helix" evidence="30">
    <location>
        <begin position="1112"/>
        <end position="1115"/>
    </location>
</feature>
<feature type="helix" evidence="30">
    <location>
        <begin position="1118"/>
        <end position="1124"/>
    </location>
</feature>
<feature type="helix" evidence="30">
    <location>
        <begin position="1127"/>
        <end position="1133"/>
    </location>
</feature>
<feature type="helix" evidence="30">
    <location>
        <begin position="1138"/>
        <end position="1151"/>
    </location>
</feature>
<feature type="helix" evidence="30">
    <location>
        <begin position="1155"/>
        <end position="1166"/>
    </location>
</feature>
<feature type="helix" evidence="30">
    <location>
        <begin position="1170"/>
        <end position="1172"/>
    </location>
</feature>
<feature type="helix" evidence="30">
    <location>
        <begin position="1178"/>
        <end position="1198"/>
    </location>
</feature>
<feature type="helix" evidence="30">
    <location>
        <begin position="1199"/>
        <end position="1202"/>
    </location>
</feature>
<feature type="helix" evidence="30">
    <location>
        <begin position="1206"/>
        <end position="1229"/>
    </location>
</feature>
<feature type="strand" evidence="31">
    <location>
        <begin position="1234"/>
        <end position="1237"/>
    </location>
</feature>
<feature type="helix" evidence="30">
    <location>
        <begin position="1242"/>
        <end position="1248"/>
    </location>
</feature>
<feature type="turn" evidence="30">
    <location>
        <begin position="1249"/>
        <end position="1251"/>
    </location>
</feature>
<feature type="helix" evidence="30">
    <location>
        <begin position="1255"/>
        <end position="1273"/>
    </location>
</feature>
<feature type="helix" evidence="30">
    <location>
        <begin position="1278"/>
        <end position="1287"/>
    </location>
</feature>
<feature type="strand" evidence="30">
    <location>
        <begin position="1293"/>
        <end position="1296"/>
    </location>
</feature>
<feature type="strand" evidence="30">
    <location>
        <begin position="1298"/>
        <end position="1302"/>
    </location>
</feature>
<feature type="helix" evidence="30">
    <location>
        <begin position="1307"/>
        <end position="1310"/>
    </location>
</feature>
<feature type="turn" evidence="30">
    <location>
        <begin position="1311"/>
        <end position="1313"/>
    </location>
</feature>
<feature type="helix" evidence="30">
    <location>
        <begin position="1316"/>
        <end position="1325"/>
    </location>
</feature>
<feature type="helix" evidence="30">
    <location>
        <begin position="1359"/>
        <end position="1367"/>
    </location>
</feature>
<feature type="strand" evidence="30">
    <location>
        <begin position="1375"/>
        <end position="1378"/>
    </location>
</feature>
<feature type="strand" evidence="30">
    <location>
        <begin position="1387"/>
        <end position="1400"/>
    </location>
</feature>
<feature type="strand" evidence="31">
    <location>
        <begin position="1404"/>
        <end position="1406"/>
    </location>
</feature>
<feature type="strand" evidence="30">
    <location>
        <begin position="1410"/>
        <end position="1412"/>
    </location>
</feature>
<feature type="helix" evidence="30">
    <location>
        <begin position="1422"/>
        <end position="1429"/>
    </location>
</feature>
<feature type="strand" evidence="31">
    <location>
        <begin position="1439"/>
        <end position="1446"/>
    </location>
</feature>
<feature type="turn" evidence="30">
    <location>
        <begin position="1447"/>
        <end position="1449"/>
    </location>
</feature>
<feature type="turn" evidence="30">
    <location>
        <begin position="1451"/>
        <end position="1453"/>
    </location>
</feature>
<feature type="strand" evidence="30">
    <location>
        <begin position="1457"/>
        <end position="1460"/>
    </location>
</feature>
<feature type="helix" evidence="30">
    <location>
        <begin position="1473"/>
        <end position="1482"/>
    </location>
</feature>
<feature type="turn" evidence="30">
    <location>
        <begin position="1488"/>
        <end position="1490"/>
    </location>
</feature>
<feature type="helix" evidence="30">
    <location>
        <begin position="1491"/>
        <end position="1501"/>
    </location>
</feature>
<feature type="helix" evidence="30">
    <location>
        <begin position="1505"/>
        <end position="1507"/>
    </location>
</feature>
<feature type="turn" evidence="30">
    <location>
        <begin position="1511"/>
        <end position="1513"/>
    </location>
</feature>
<feature type="turn" evidence="30">
    <location>
        <begin position="1517"/>
        <end position="1519"/>
    </location>
</feature>
<feature type="helix" evidence="30">
    <location>
        <begin position="1521"/>
        <end position="1524"/>
    </location>
</feature>
<feature type="turn" evidence="30">
    <location>
        <begin position="1525"/>
        <end position="1529"/>
    </location>
</feature>
<feature type="strand" evidence="30">
    <location>
        <begin position="1534"/>
        <end position="1537"/>
    </location>
</feature>
<feature type="strand" evidence="30">
    <location>
        <begin position="1539"/>
        <end position="1544"/>
    </location>
</feature>
<feature type="helix" evidence="30">
    <location>
        <begin position="1547"/>
        <end position="1562"/>
    </location>
</feature>
<feature type="strand" evidence="30">
    <location>
        <begin position="1566"/>
        <end position="1568"/>
    </location>
</feature>
<feature type="helix" evidence="30">
    <location>
        <begin position="1576"/>
        <end position="1579"/>
    </location>
</feature>
<feature type="strand" evidence="30">
    <location>
        <begin position="1582"/>
        <end position="1584"/>
    </location>
</feature>
<feature type="strand" evidence="30">
    <location>
        <begin position="1586"/>
        <end position="1588"/>
    </location>
</feature>
<feature type="strand" evidence="30">
    <location>
        <begin position="1591"/>
        <end position="1593"/>
    </location>
</feature>
<feature type="helix" evidence="30">
    <location>
        <begin position="1598"/>
        <end position="1605"/>
    </location>
</feature>
<feature type="strand" evidence="31">
    <location>
        <begin position="1610"/>
        <end position="1614"/>
    </location>
</feature>
<feature type="strand" evidence="30">
    <location>
        <begin position="1617"/>
        <end position="1619"/>
    </location>
</feature>
<feature type="helix" evidence="30">
    <location>
        <begin position="1620"/>
        <end position="1633"/>
    </location>
</feature>
<feature type="strand" evidence="30">
    <location>
        <begin position="1645"/>
        <end position="1648"/>
    </location>
</feature>
<feature type="helix" evidence="30">
    <location>
        <begin position="1661"/>
        <end position="1672"/>
    </location>
</feature>
<feature type="strand" evidence="30">
    <location>
        <begin position="1675"/>
        <end position="1677"/>
    </location>
</feature>
<feature type="helix" evidence="30">
    <location>
        <begin position="1685"/>
        <end position="1689"/>
    </location>
</feature>
<feature type="helix" evidence="30">
    <location>
        <begin position="1690"/>
        <end position="1695"/>
    </location>
</feature>
<dbReference type="EC" id="7.6.2.1" evidence="11 21 22"/>
<dbReference type="EC" id="7.6.2.2" evidence="27"/>
<dbReference type="EMBL" id="U78735">
    <property type="protein sequence ID" value="AAC50967.1"/>
    <property type="molecule type" value="mRNA"/>
</dbReference>
<dbReference type="EMBL" id="X97187">
    <property type="protein sequence ID" value="CAA65825.1"/>
    <property type="molecule type" value="mRNA"/>
</dbReference>
<dbReference type="EMBL" id="AB070929">
    <property type="protein sequence ID" value="BAB86781.1"/>
    <property type="molecule type" value="mRNA"/>
</dbReference>
<dbReference type="EMBL" id="DQ073080">
    <property type="protein sequence ID" value="AAY57325.1"/>
    <property type="molecule type" value="Genomic_DNA"/>
</dbReference>
<dbReference type="EMBL" id="CH471112">
    <property type="protein sequence ID" value="EAW85515.1"/>
    <property type="molecule type" value="Genomic_DNA"/>
</dbReference>
<dbReference type="EMBL" id="BC020724">
    <property type="protein sequence ID" value="AAH20724.1"/>
    <property type="molecule type" value="mRNA"/>
</dbReference>
<dbReference type="EMBL" id="BC062779">
    <property type="protein sequence ID" value="AAH62779.1"/>
    <property type="molecule type" value="mRNA"/>
</dbReference>
<dbReference type="EMBL" id="AC009065">
    <property type="status" value="NOT_ANNOTATED_CDS"/>
    <property type="molecule type" value="Genomic_DNA"/>
</dbReference>
<dbReference type="EMBL" id="AC098805">
    <property type="status" value="NOT_ANNOTATED_CDS"/>
    <property type="molecule type" value="Genomic_DNA"/>
</dbReference>
<dbReference type="EMBL" id="AC106820">
    <property type="status" value="NOT_ANNOTATED_CDS"/>
    <property type="molecule type" value="Genomic_DNA"/>
</dbReference>
<dbReference type="EMBL" id="BC140895">
    <property type="protein sequence ID" value="AAI40896.1"/>
    <property type="molecule type" value="mRNA"/>
</dbReference>
<dbReference type="EMBL" id="BC146866">
    <property type="protein sequence ID" value="AAI46867.1"/>
    <property type="molecule type" value="mRNA"/>
</dbReference>
<dbReference type="CCDS" id="CCDS10466.1">
    <molecule id="Q99758-1"/>
</dbReference>
<dbReference type="PIR" id="A59188">
    <property type="entry name" value="A59188"/>
</dbReference>
<dbReference type="PIR" id="S71363">
    <property type="entry name" value="S71363"/>
</dbReference>
<dbReference type="RefSeq" id="NP_001080.2">
    <molecule id="Q99758-1"/>
    <property type="nucleotide sequence ID" value="NM_001089.3"/>
</dbReference>
<dbReference type="PDB" id="7W01">
    <property type="method" value="EM"/>
    <property type="resolution" value="3.30 A"/>
    <property type="chains" value="A=1-1704"/>
</dbReference>
<dbReference type="PDB" id="7W02">
    <property type="method" value="EM"/>
    <property type="resolution" value="3.30 A"/>
    <property type="chains" value="A=1-1704"/>
</dbReference>
<dbReference type="PDBsum" id="7W01"/>
<dbReference type="PDBsum" id="7W02"/>
<dbReference type="EMDB" id="EMD-32233"/>
<dbReference type="EMDB" id="EMD-32234"/>
<dbReference type="SMR" id="Q99758"/>
<dbReference type="BioGRID" id="106539">
    <property type="interactions" value="49"/>
</dbReference>
<dbReference type="FunCoup" id="Q99758">
    <property type="interactions" value="1278"/>
</dbReference>
<dbReference type="IntAct" id="Q99758">
    <property type="interactions" value="31"/>
</dbReference>
<dbReference type="MINT" id="Q99758"/>
<dbReference type="STRING" id="9606.ENSP00000301732"/>
<dbReference type="DrugBank" id="DB00619">
    <property type="generic name" value="Imatinib"/>
</dbReference>
<dbReference type="TCDB" id="3.A.1.211.5">
    <property type="family name" value="the atp-binding cassette (abc) superfamily"/>
</dbReference>
<dbReference type="GlyCosmos" id="Q99758">
    <property type="glycosylation" value="6 sites, No reported glycans"/>
</dbReference>
<dbReference type="GlyGen" id="Q99758">
    <property type="glycosylation" value="6 sites, 1 N-linked glycan (1 site)"/>
</dbReference>
<dbReference type="iPTMnet" id="Q99758"/>
<dbReference type="PhosphoSitePlus" id="Q99758"/>
<dbReference type="SwissPalm" id="Q99758"/>
<dbReference type="BioMuta" id="ABCA3"/>
<dbReference type="DMDM" id="85700402"/>
<dbReference type="jPOST" id="Q99758"/>
<dbReference type="MassIVE" id="Q99758"/>
<dbReference type="PaxDb" id="9606-ENSP00000301732"/>
<dbReference type="PeptideAtlas" id="Q99758"/>
<dbReference type="ProteomicsDB" id="66998"/>
<dbReference type="ProteomicsDB" id="78463">
    <molecule id="Q99758-1"/>
</dbReference>
<dbReference type="Antibodypedia" id="1409">
    <property type="antibodies" value="72 antibodies from 18 providers"/>
</dbReference>
<dbReference type="DNASU" id="21"/>
<dbReference type="Ensembl" id="ENST00000301732.10">
    <molecule id="Q99758-1"/>
    <property type="protein sequence ID" value="ENSP00000301732.5"/>
    <property type="gene ID" value="ENSG00000167972.14"/>
</dbReference>
<dbReference type="Ensembl" id="ENST00000567910.1">
    <molecule id="Q99758-2"/>
    <property type="protein sequence ID" value="ENSP00000454397.1"/>
    <property type="gene ID" value="ENSG00000167972.14"/>
</dbReference>
<dbReference type="GeneID" id="21"/>
<dbReference type="KEGG" id="hsa:21"/>
<dbReference type="MANE-Select" id="ENST00000301732.10">
    <property type="protein sequence ID" value="ENSP00000301732.5"/>
    <property type="RefSeq nucleotide sequence ID" value="NM_001089.3"/>
    <property type="RefSeq protein sequence ID" value="NP_001080.2"/>
</dbReference>
<dbReference type="UCSC" id="uc002cpy.2">
    <molecule id="Q99758-1"/>
    <property type="organism name" value="human"/>
</dbReference>
<dbReference type="AGR" id="HGNC:33"/>
<dbReference type="CTD" id="21"/>
<dbReference type="DisGeNET" id="21"/>
<dbReference type="GeneCards" id="ABCA3"/>
<dbReference type="HGNC" id="HGNC:33">
    <property type="gene designation" value="ABCA3"/>
</dbReference>
<dbReference type="HPA" id="ENSG00000167972">
    <property type="expression patterns" value="Tissue enhanced (brain, lung)"/>
</dbReference>
<dbReference type="MalaCards" id="ABCA3"/>
<dbReference type="MIM" id="601615">
    <property type="type" value="gene"/>
</dbReference>
<dbReference type="MIM" id="610921">
    <property type="type" value="phenotype"/>
</dbReference>
<dbReference type="neXtProt" id="NX_Q99758"/>
<dbReference type="OpenTargets" id="ENSG00000167972"/>
<dbReference type="Orphanet" id="2032">
    <property type="disease" value="Idiopathic pulmonary fibrosis"/>
</dbReference>
<dbReference type="Orphanet" id="440402">
    <property type="disease" value="Interstitial lung disease due to ABCA3 deficiency"/>
</dbReference>
<dbReference type="Orphanet" id="217563">
    <property type="disease" value="Neonatal acute respiratory distress syndrome"/>
</dbReference>
<dbReference type="Orphanet" id="685082">
    <property type="disease" value="Pediatric acute respiratory distress syndrome"/>
</dbReference>
<dbReference type="PharmGKB" id="PA24378"/>
<dbReference type="VEuPathDB" id="HostDB:ENSG00000167972"/>
<dbReference type="eggNOG" id="KOG0059">
    <property type="taxonomic scope" value="Eukaryota"/>
</dbReference>
<dbReference type="GeneTree" id="ENSGT00940000155289"/>
<dbReference type="HOGENOM" id="CLU_113155_0_0_1"/>
<dbReference type="InParanoid" id="Q99758"/>
<dbReference type="OMA" id="WKNWIVL"/>
<dbReference type="OrthoDB" id="6512918at2759"/>
<dbReference type="PAN-GO" id="Q99758">
    <property type="GO annotations" value="4 GO annotations based on evolutionary models"/>
</dbReference>
<dbReference type="PhylomeDB" id="Q99758"/>
<dbReference type="TreeFam" id="TF105191"/>
<dbReference type="PathwayCommons" id="Q99758"/>
<dbReference type="Reactome" id="R-HSA-1369062">
    <property type="pathway name" value="ABC transporters in lipid homeostasis"/>
</dbReference>
<dbReference type="Reactome" id="R-HSA-5683678">
    <property type="pathway name" value="Defective ABCA3 causes SMDP3"/>
</dbReference>
<dbReference type="Reactome" id="R-HSA-5683826">
    <property type="pathway name" value="Surfactant metabolism"/>
</dbReference>
<dbReference type="Reactome" id="R-HSA-5688399">
    <property type="pathway name" value="Defective ABCA3 causes SMDP3"/>
</dbReference>
<dbReference type="SignaLink" id="Q99758"/>
<dbReference type="SIGNOR" id="Q99758"/>
<dbReference type="BioGRID-ORCS" id="21">
    <property type="hits" value="17 hits in 1158 CRISPR screens"/>
</dbReference>
<dbReference type="ChiTaRS" id="ABCA3">
    <property type="organism name" value="human"/>
</dbReference>
<dbReference type="GeneWiki" id="ABCA3"/>
<dbReference type="GenomeRNAi" id="21"/>
<dbReference type="Pharos" id="Q99758">
    <property type="development level" value="Tbio"/>
</dbReference>
<dbReference type="PRO" id="PR:Q99758"/>
<dbReference type="Proteomes" id="UP000005640">
    <property type="component" value="Chromosome 16"/>
</dbReference>
<dbReference type="RNAct" id="Q99758">
    <property type="molecule type" value="protein"/>
</dbReference>
<dbReference type="Bgee" id="ENSG00000167972">
    <property type="expression patterns" value="Expressed in lower lobe of lung and 147 other cell types or tissues"/>
</dbReference>
<dbReference type="ExpressionAtlas" id="Q99758">
    <property type="expression patterns" value="baseline and differential"/>
</dbReference>
<dbReference type="GO" id="GO:0097208">
    <property type="term" value="C:alveolar lamellar body"/>
    <property type="evidence" value="ECO:0000314"/>
    <property type="project" value="MGI"/>
</dbReference>
<dbReference type="GO" id="GO:0097233">
    <property type="term" value="C:alveolar lamellar body membrane"/>
    <property type="evidence" value="ECO:0000314"/>
    <property type="project" value="UniProtKB"/>
</dbReference>
<dbReference type="GO" id="GO:0030659">
    <property type="term" value="C:cytoplasmic vesicle membrane"/>
    <property type="evidence" value="ECO:0000314"/>
    <property type="project" value="UniProtKB"/>
</dbReference>
<dbReference type="GO" id="GO:0005615">
    <property type="term" value="C:extracellular space"/>
    <property type="evidence" value="ECO:0007005"/>
    <property type="project" value="UniProtKB"/>
</dbReference>
<dbReference type="GO" id="GO:0043231">
    <property type="term" value="C:intracellular membrane-bounded organelle"/>
    <property type="evidence" value="ECO:0000318"/>
    <property type="project" value="GO_Central"/>
</dbReference>
<dbReference type="GO" id="GO:0042599">
    <property type="term" value="C:lamellar body"/>
    <property type="evidence" value="ECO:0000314"/>
    <property type="project" value="UniProtKB"/>
</dbReference>
<dbReference type="GO" id="GO:0097232">
    <property type="term" value="C:lamellar body membrane"/>
    <property type="evidence" value="ECO:0000314"/>
    <property type="project" value="UniProtKB"/>
</dbReference>
<dbReference type="GO" id="GO:0005770">
    <property type="term" value="C:late endosome"/>
    <property type="evidence" value="ECO:0000314"/>
    <property type="project" value="UniProtKB"/>
</dbReference>
<dbReference type="GO" id="GO:0005765">
    <property type="term" value="C:lysosomal membrane"/>
    <property type="evidence" value="ECO:0007669"/>
    <property type="project" value="UniProtKB-SubCell"/>
</dbReference>
<dbReference type="GO" id="GO:0032585">
    <property type="term" value="C:multivesicular body membrane"/>
    <property type="evidence" value="ECO:0007669"/>
    <property type="project" value="UniProtKB-SubCell"/>
</dbReference>
<dbReference type="GO" id="GO:0005886">
    <property type="term" value="C:plasma membrane"/>
    <property type="evidence" value="ECO:0000314"/>
    <property type="project" value="MGI"/>
</dbReference>
<dbReference type="GO" id="GO:0008559">
    <property type="term" value="F:ABC-type xenobiotic transporter activity"/>
    <property type="evidence" value="ECO:0000315"/>
    <property type="project" value="UniProtKB"/>
</dbReference>
<dbReference type="GO" id="GO:0005524">
    <property type="term" value="F:ATP binding"/>
    <property type="evidence" value="ECO:0007669"/>
    <property type="project" value="UniProtKB-KW"/>
</dbReference>
<dbReference type="GO" id="GO:0016887">
    <property type="term" value="F:ATP hydrolysis activity"/>
    <property type="evidence" value="ECO:0000314"/>
    <property type="project" value="UniProtKB"/>
</dbReference>
<dbReference type="GO" id="GO:0042626">
    <property type="term" value="F:ATPase-coupled transmembrane transporter activity"/>
    <property type="evidence" value="ECO:0000318"/>
    <property type="project" value="GO_Central"/>
</dbReference>
<dbReference type="GO" id="GO:0005319">
    <property type="term" value="F:lipid transporter activity"/>
    <property type="evidence" value="ECO:0000318"/>
    <property type="project" value="GO_Central"/>
</dbReference>
<dbReference type="GO" id="GO:0140345">
    <property type="term" value="F:phosphatidylcholine flippase activity"/>
    <property type="evidence" value="ECO:0000315"/>
    <property type="project" value="UniProtKB"/>
</dbReference>
<dbReference type="GO" id="GO:0120019">
    <property type="term" value="F:phosphatidylcholine transfer activity"/>
    <property type="evidence" value="ECO:0000315"/>
    <property type="project" value="UniProtKB"/>
</dbReference>
<dbReference type="GO" id="GO:0006869">
    <property type="term" value="P:lipid transport"/>
    <property type="evidence" value="ECO:0000318"/>
    <property type="project" value="GO_Central"/>
</dbReference>
<dbReference type="GO" id="GO:0030324">
    <property type="term" value="P:lung development"/>
    <property type="evidence" value="ECO:0000250"/>
    <property type="project" value="UniProtKB"/>
</dbReference>
<dbReference type="GO" id="GO:0070925">
    <property type="term" value="P:organelle assembly"/>
    <property type="evidence" value="ECO:0000250"/>
    <property type="project" value="UniProtKB"/>
</dbReference>
<dbReference type="GO" id="GO:0046470">
    <property type="term" value="P:phosphatidylcholine metabolic process"/>
    <property type="evidence" value="ECO:0000315"/>
    <property type="project" value="UniProtKB"/>
</dbReference>
<dbReference type="GO" id="GO:0046471">
    <property type="term" value="P:phosphatidylglycerol metabolic process"/>
    <property type="evidence" value="ECO:0000250"/>
    <property type="project" value="UniProtKB"/>
</dbReference>
<dbReference type="GO" id="GO:0055091">
    <property type="term" value="P:phospholipid homeostasis"/>
    <property type="evidence" value="ECO:0007669"/>
    <property type="project" value="Ensembl"/>
</dbReference>
<dbReference type="GO" id="GO:0015914">
    <property type="term" value="P:phospholipid transport"/>
    <property type="evidence" value="ECO:0000315"/>
    <property type="project" value="UniProtKB"/>
</dbReference>
<dbReference type="GO" id="GO:0010875">
    <property type="term" value="P:positive regulation of cholesterol efflux"/>
    <property type="evidence" value="ECO:0000315"/>
    <property type="project" value="UniProtKB"/>
</dbReference>
<dbReference type="GO" id="GO:1902995">
    <property type="term" value="P:positive regulation of phospholipid efflux"/>
    <property type="evidence" value="ECO:0000315"/>
    <property type="project" value="UniProtKB"/>
</dbReference>
<dbReference type="GO" id="GO:2001140">
    <property type="term" value="P:positive regulation of phospholipid transport"/>
    <property type="evidence" value="ECO:0000315"/>
    <property type="project" value="UniProtKB"/>
</dbReference>
<dbReference type="GO" id="GO:0032464">
    <property type="term" value="P:positive regulation of protein homooligomerization"/>
    <property type="evidence" value="ECO:0000314"/>
    <property type="project" value="UniProtKB"/>
</dbReference>
<dbReference type="GO" id="GO:0046890">
    <property type="term" value="P:regulation of lipid biosynthetic process"/>
    <property type="evidence" value="ECO:0007669"/>
    <property type="project" value="Ensembl"/>
</dbReference>
<dbReference type="GO" id="GO:0150172">
    <property type="term" value="P:regulation of phosphatidylcholine metabolic process"/>
    <property type="evidence" value="ECO:0000315"/>
    <property type="project" value="UniProtKB"/>
</dbReference>
<dbReference type="GO" id="GO:0051384">
    <property type="term" value="P:response to glucocorticoid"/>
    <property type="evidence" value="ECO:0007669"/>
    <property type="project" value="Ensembl"/>
</dbReference>
<dbReference type="GO" id="GO:0009410">
    <property type="term" value="P:response to xenobiotic stimulus"/>
    <property type="evidence" value="ECO:0000304"/>
    <property type="project" value="ProtInc"/>
</dbReference>
<dbReference type="GO" id="GO:0043129">
    <property type="term" value="P:surfactant homeostasis"/>
    <property type="evidence" value="ECO:0000250"/>
    <property type="project" value="UniProtKB"/>
</dbReference>
<dbReference type="GO" id="GO:0046618">
    <property type="term" value="P:xenobiotic export from cell"/>
    <property type="evidence" value="ECO:0000315"/>
    <property type="project" value="UniProtKB"/>
</dbReference>
<dbReference type="GO" id="GO:0006855">
    <property type="term" value="P:xenobiotic transmembrane transport"/>
    <property type="evidence" value="ECO:0000315"/>
    <property type="project" value="UniProtKB"/>
</dbReference>
<dbReference type="GO" id="GO:0042908">
    <property type="term" value="P:xenobiotic transport"/>
    <property type="evidence" value="ECO:0000315"/>
    <property type="project" value="UniProtKB"/>
</dbReference>
<dbReference type="CDD" id="cd03263">
    <property type="entry name" value="ABC_subfamily_A"/>
    <property type="match status" value="2"/>
</dbReference>
<dbReference type="FunFam" id="3.40.50.300:FF:000327">
    <property type="entry name" value="ATP-binding cassette sub-family A member 3"/>
    <property type="match status" value="1"/>
</dbReference>
<dbReference type="FunFam" id="3.40.50.300:FF:000465">
    <property type="entry name" value="ATP-binding cassette, sub-family A (ABC1), member 3"/>
    <property type="match status" value="1"/>
</dbReference>
<dbReference type="Gene3D" id="3.40.50.300">
    <property type="entry name" value="P-loop containing nucleotide triphosphate hydrolases"/>
    <property type="match status" value="2"/>
</dbReference>
<dbReference type="InterPro" id="IPR003593">
    <property type="entry name" value="AAA+_ATPase"/>
</dbReference>
<dbReference type="InterPro" id="IPR013525">
    <property type="entry name" value="ABC2_TM"/>
</dbReference>
<dbReference type="InterPro" id="IPR003439">
    <property type="entry name" value="ABC_transporter-like_ATP-bd"/>
</dbReference>
<dbReference type="InterPro" id="IPR017871">
    <property type="entry name" value="ABC_transporter-like_CS"/>
</dbReference>
<dbReference type="InterPro" id="IPR026082">
    <property type="entry name" value="ABCA"/>
</dbReference>
<dbReference type="InterPro" id="IPR027417">
    <property type="entry name" value="P-loop_NTPase"/>
</dbReference>
<dbReference type="InterPro" id="IPR056264">
    <property type="entry name" value="R2_ABCA1-4-like"/>
</dbReference>
<dbReference type="PANTHER" id="PTHR19229:SF250">
    <property type="entry name" value="ABC TRANSPORTER DOMAIN-CONTAINING PROTEIN-RELATED"/>
    <property type="match status" value="1"/>
</dbReference>
<dbReference type="PANTHER" id="PTHR19229">
    <property type="entry name" value="ATP-BINDING CASSETTE TRANSPORTER SUBFAMILY A ABCA"/>
    <property type="match status" value="1"/>
</dbReference>
<dbReference type="Pfam" id="PF12698">
    <property type="entry name" value="ABC2_membrane_3"/>
    <property type="match status" value="2"/>
</dbReference>
<dbReference type="Pfam" id="PF00005">
    <property type="entry name" value="ABC_tran"/>
    <property type="match status" value="2"/>
</dbReference>
<dbReference type="Pfam" id="PF23321">
    <property type="entry name" value="R1_ABCA1"/>
    <property type="match status" value="1"/>
</dbReference>
<dbReference type="SMART" id="SM00382">
    <property type="entry name" value="AAA"/>
    <property type="match status" value="2"/>
</dbReference>
<dbReference type="SUPFAM" id="SSF52540">
    <property type="entry name" value="P-loop containing nucleoside triphosphate hydrolases"/>
    <property type="match status" value="2"/>
</dbReference>
<dbReference type="PROSITE" id="PS00211">
    <property type="entry name" value="ABC_TRANSPORTER_1"/>
    <property type="match status" value="1"/>
</dbReference>
<dbReference type="PROSITE" id="PS50893">
    <property type="entry name" value="ABC_TRANSPORTER_2"/>
    <property type="match status" value="2"/>
</dbReference>
<name>ABCA3_HUMAN</name>
<accession>Q99758</accession>
<accession>B2RU09</accession>
<accession>Q54A95</accession>
<accession>Q6P5P9</accession>
<accession>Q92473</accession>
<evidence type="ECO:0000250" key="1"/>
<evidence type="ECO:0000250" key="2">
    <source>
        <dbReference type="UniProtKB" id="Q8R420"/>
    </source>
</evidence>
<evidence type="ECO:0000255" key="3"/>
<evidence type="ECO:0000255" key="4">
    <source>
        <dbReference type="PROSITE-ProRule" id="PRU00434"/>
    </source>
</evidence>
<evidence type="ECO:0000269" key="5">
    <source>
    </source>
</evidence>
<evidence type="ECO:0000269" key="6">
    <source>
    </source>
</evidence>
<evidence type="ECO:0000269" key="7">
    <source>
    </source>
</evidence>
<evidence type="ECO:0000269" key="8">
    <source>
    </source>
</evidence>
<evidence type="ECO:0000269" key="9">
    <source>
    </source>
</evidence>
<evidence type="ECO:0000269" key="10">
    <source>
    </source>
</evidence>
<evidence type="ECO:0000269" key="11">
    <source>
    </source>
</evidence>
<evidence type="ECO:0000269" key="12">
    <source>
    </source>
</evidence>
<evidence type="ECO:0000269" key="13">
    <source>
    </source>
</evidence>
<evidence type="ECO:0000269" key="14">
    <source>
    </source>
</evidence>
<evidence type="ECO:0000269" key="15">
    <source>
    </source>
</evidence>
<evidence type="ECO:0000269" key="16">
    <source>
    </source>
</evidence>
<evidence type="ECO:0000269" key="17">
    <source>
    </source>
</evidence>
<evidence type="ECO:0000269" key="18">
    <source>
    </source>
</evidence>
<evidence type="ECO:0000269" key="19">
    <source>
    </source>
</evidence>
<evidence type="ECO:0000269" key="20">
    <source>
    </source>
</evidence>
<evidence type="ECO:0000269" key="21">
    <source>
    </source>
</evidence>
<evidence type="ECO:0000269" key="22">
    <source>
    </source>
</evidence>
<evidence type="ECO:0000269" key="23">
    <source>
    </source>
</evidence>
<evidence type="ECO:0000269" key="24">
    <source ref="4"/>
</evidence>
<evidence type="ECO:0000303" key="25">
    <source>
    </source>
</evidence>
<evidence type="ECO:0000305" key="26"/>
<evidence type="ECO:0000305" key="27">
    <source>
    </source>
</evidence>
<evidence type="ECO:0000305" key="28">
    <source>
    </source>
</evidence>
<evidence type="ECO:0000312" key="29">
    <source>
        <dbReference type="HGNC" id="HGNC:33"/>
    </source>
</evidence>
<evidence type="ECO:0007829" key="30">
    <source>
        <dbReference type="PDB" id="7W01"/>
    </source>
</evidence>
<evidence type="ECO:0007829" key="31">
    <source>
        <dbReference type="PDB" id="7W02"/>
    </source>
</evidence>